<organism>
    <name type="scientific">Synechococcus elongatus (strain ATCC 33912 / PCC 7942 / FACHB-805)</name>
    <name type="common">Anacystis nidulans R2</name>
    <dbReference type="NCBI Taxonomy" id="1140"/>
    <lineage>
        <taxon>Bacteria</taxon>
        <taxon>Bacillati</taxon>
        <taxon>Cyanobacteriota</taxon>
        <taxon>Cyanophyceae</taxon>
        <taxon>Synechococcales</taxon>
        <taxon>Synechococcaceae</taxon>
        <taxon>Synechococcus</taxon>
    </lineage>
</organism>
<gene>
    <name type="primary">pepA</name>
    <name type="synonym">ampA</name>
    <name type="synonym">lap</name>
    <name type="ordered locus">Synpcc7942_1190</name>
    <name type="ORF">SEE0038</name>
</gene>
<dbReference type="EC" id="3.4.11.1"/>
<dbReference type="EC" id="3.4.11.10"/>
<dbReference type="EMBL" id="AY120853">
    <property type="protein sequence ID" value="AAM82713.1"/>
    <property type="status" value="ALT_INIT"/>
    <property type="molecule type" value="Genomic_DNA"/>
</dbReference>
<dbReference type="EMBL" id="CP000100">
    <property type="protein sequence ID" value="ABB57220.1"/>
    <property type="molecule type" value="Genomic_DNA"/>
</dbReference>
<dbReference type="EMBL" id="Y13330">
    <property type="protein sequence ID" value="CAA73771.1"/>
    <property type="molecule type" value="Genomic_DNA"/>
</dbReference>
<dbReference type="RefSeq" id="WP_011377907.1">
    <property type="nucleotide sequence ID" value="NZ_JACJTX010000003.1"/>
</dbReference>
<dbReference type="SMR" id="O06865"/>
<dbReference type="STRING" id="1140.Synpcc7942_1190"/>
<dbReference type="MEROPS" id="M17.A01"/>
<dbReference type="PaxDb" id="1140-Synpcc7942_1190"/>
<dbReference type="KEGG" id="syf:Synpcc7942_1190"/>
<dbReference type="eggNOG" id="COG0260">
    <property type="taxonomic scope" value="Bacteria"/>
</dbReference>
<dbReference type="HOGENOM" id="CLU_013734_5_1_3"/>
<dbReference type="OrthoDB" id="9809354at2"/>
<dbReference type="BioCyc" id="SYNEL:SYNPCC7942_1190-MONOMER"/>
<dbReference type="Proteomes" id="UP000889800">
    <property type="component" value="Chromosome"/>
</dbReference>
<dbReference type="GO" id="GO:0005737">
    <property type="term" value="C:cytoplasm"/>
    <property type="evidence" value="ECO:0007669"/>
    <property type="project" value="UniProtKB-SubCell"/>
</dbReference>
<dbReference type="GO" id="GO:0030145">
    <property type="term" value="F:manganese ion binding"/>
    <property type="evidence" value="ECO:0007669"/>
    <property type="project" value="UniProtKB-UniRule"/>
</dbReference>
<dbReference type="GO" id="GO:0070006">
    <property type="term" value="F:metalloaminopeptidase activity"/>
    <property type="evidence" value="ECO:0007669"/>
    <property type="project" value="InterPro"/>
</dbReference>
<dbReference type="GO" id="GO:0006508">
    <property type="term" value="P:proteolysis"/>
    <property type="evidence" value="ECO:0007669"/>
    <property type="project" value="UniProtKB-KW"/>
</dbReference>
<dbReference type="CDD" id="cd00433">
    <property type="entry name" value="Peptidase_M17"/>
    <property type="match status" value="1"/>
</dbReference>
<dbReference type="Gene3D" id="3.40.220.10">
    <property type="entry name" value="Leucine Aminopeptidase, subunit E, domain 1"/>
    <property type="match status" value="1"/>
</dbReference>
<dbReference type="Gene3D" id="3.40.630.10">
    <property type="entry name" value="Zn peptidases"/>
    <property type="match status" value="1"/>
</dbReference>
<dbReference type="HAMAP" id="MF_00181">
    <property type="entry name" value="Cytosol_peptidase_M17"/>
    <property type="match status" value="1"/>
</dbReference>
<dbReference type="InterPro" id="IPR011356">
    <property type="entry name" value="Leucine_aapep/pepB"/>
</dbReference>
<dbReference type="InterPro" id="IPR043472">
    <property type="entry name" value="Macro_dom-like"/>
</dbReference>
<dbReference type="InterPro" id="IPR000819">
    <property type="entry name" value="Peptidase_M17_C"/>
</dbReference>
<dbReference type="InterPro" id="IPR023042">
    <property type="entry name" value="Peptidase_M17_leu_NH2_pept"/>
</dbReference>
<dbReference type="InterPro" id="IPR008283">
    <property type="entry name" value="Peptidase_M17_N"/>
</dbReference>
<dbReference type="NCBIfam" id="NF002076">
    <property type="entry name" value="PRK00913.2-3"/>
    <property type="match status" value="1"/>
</dbReference>
<dbReference type="PANTHER" id="PTHR11963:SF23">
    <property type="entry name" value="CYTOSOL AMINOPEPTIDASE"/>
    <property type="match status" value="1"/>
</dbReference>
<dbReference type="PANTHER" id="PTHR11963">
    <property type="entry name" value="LEUCINE AMINOPEPTIDASE-RELATED"/>
    <property type="match status" value="1"/>
</dbReference>
<dbReference type="Pfam" id="PF00883">
    <property type="entry name" value="Peptidase_M17"/>
    <property type="match status" value="1"/>
</dbReference>
<dbReference type="Pfam" id="PF02789">
    <property type="entry name" value="Peptidase_M17_N"/>
    <property type="match status" value="1"/>
</dbReference>
<dbReference type="PRINTS" id="PR00481">
    <property type="entry name" value="LAMNOPPTDASE"/>
</dbReference>
<dbReference type="SUPFAM" id="SSF52949">
    <property type="entry name" value="Macro domain-like"/>
    <property type="match status" value="1"/>
</dbReference>
<dbReference type="SUPFAM" id="SSF53187">
    <property type="entry name" value="Zn-dependent exopeptidases"/>
    <property type="match status" value="1"/>
</dbReference>
<dbReference type="PROSITE" id="PS00631">
    <property type="entry name" value="CYTOSOL_AP"/>
    <property type="match status" value="1"/>
</dbReference>
<sequence length="486" mass="51006">MTFQAIATHPQDWTGDTLALGLTTAAIGETLSSELQKLDQQWNGVLQELISDSEFKAKLAETTTTRIGGSIRKLILVGLGESPTTEDYRRAAAAVAKQARSFKSQTLAIAFPPSDDPAAIASAIVEGISLALYKDQRFKSEPDTASGPSSIELLGLAGQEAAIARAEQVVAGVELARQLVAAPANVVTPVTMADTAQELAAELGLELEILEADECEKRGMGAFLGVAKASDLPPKFIHLTYRPESTPRRKLAIVGKGLTFDSGGYNIKGAGSGIEMMKTDMGGAAATLGAAKAIGLIKPDVEVHFISAVTENMISGRGMHPGDILTASNGKTIEVNNTDAEGRLTLADALVFADGLGVDAIVDLATLTGACIIALGDDIAGLWSPSDDLAEQLLQAGKAAGEKLWRLPLEEPYLDGLKSPVADYKNTGPRAGGSITAALFLKQFVKHPVWAHLDVAGPVWSDKEKHYNPAGATGYGVRTLVNWVLS</sequence>
<protein>
    <recommendedName>
        <fullName>Probable cytosol aminopeptidase</fullName>
        <ecNumber>3.4.11.1</ecNumber>
    </recommendedName>
    <alternativeName>
        <fullName>Leucine aminopeptidase</fullName>
        <shortName>LAP</shortName>
        <ecNumber>3.4.11.10</ecNumber>
    </alternativeName>
    <alternativeName>
        <fullName>Leucyl aminopeptidase</fullName>
    </alternativeName>
</protein>
<proteinExistence type="inferred from homology"/>
<name>AMPA_SYNE7</name>
<reference key="1">
    <citation type="submission" date="2002-06" db="EMBL/GenBank/DDBJ databases">
        <title>Synechococcus elongatus PCC7942 cosmid 7G3.</title>
        <authorList>
            <person name="Holtman C.K."/>
            <person name="Sandoval P."/>
            <person name="Chen Y."/>
            <person name="Socias T."/>
            <person name="Mohler B.J."/>
            <person name="McMurtry S."/>
            <person name="Gonzalez A."/>
            <person name="Salinas I."/>
            <person name="Golden S.S."/>
            <person name="Youderian P."/>
        </authorList>
    </citation>
    <scope>NUCLEOTIDE SEQUENCE [GENOMIC DNA]</scope>
</reference>
<reference key="2">
    <citation type="submission" date="2005-08" db="EMBL/GenBank/DDBJ databases">
        <title>Complete sequence of chromosome 1 of Synechococcus elongatus PCC 7942.</title>
        <authorList>
            <consortium name="US DOE Joint Genome Institute"/>
            <person name="Copeland A."/>
            <person name="Lucas S."/>
            <person name="Lapidus A."/>
            <person name="Barry K."/>
            <person name="Detter J.C."/>
            <person name="Glavina T."/>
            <person name="Hammon N."/>
            <person name="Israni S."/>
            <person name="Pitluck S."/>
            <person name="Schmutz J."/>
            <person name="Larimer F."/>
            <person name="Land M."/>
            <person name="Kyrpides N."/>
            <person name="Lykidis A."/>
            <person name="Golden S."/>
            <person name="Richardson P."/>
        </authorList>
    </citation>
    <scope>NUCLEOTIDE SEQUENCE [LARGE SCALE GENOMIC DNA]</scope>
    <source>
        <strain>ATCC 33912 / PCC 7942 / FACHB-805</strain>
    </source>
</reference>
<reference key="3">
    <citation type="submission" date="1997-05" db="EMBL/GenBank/DDBJ databases">
        <title>The narC locus of Synechococcus sp. strain PCC 7942 corresponds to a mobA gene for molybdopterin guanine dinucleotide biosynthesis.</title>
        <authorList>
            <person name="Rubio L.M."/>
            <person name="Flores E."/>
            <person name="Herrero A."/>
        </authorList>
    </citation>
    <scope>NUCLEOTIDE SEQUENCE [GENOMIC DNA] OF 362-486</scope>
</reference>
<accession>O06865</accession>
<accession>Q31NZ9</accession>
<accession>Q8KPQ6</accession>
<comment type="function">
    <text evidence="1">Presumably involved in the processing and regular turnover of intracellular proteins. Catalyzes the removal of unsubstituted N-terminal amino acids from various peptides (By similarity).</text>
</comment>
<comment type="catalytic activity">
    <reaction>
        <text>Release of an N-terminal amino acid, Xaa-|-Yaa-, in which Xaa is preferably Leu, but may be other amino acids including Pro although not Arg or Lys, and Yaa may be Pro. Amino acid amides and methyl esters are also readily hydrolyzed, but rates on arylamides are exceedingly low.</text>
        <dbReference type="EC" id="3.4.11.1"/>
    </reaction>
</comment>
<comment type="catalytic activity">
    <reaction>
        <text>Release of an N-terminal amino acid, preferentially leucine, but not glutamic or aspartic acids.</text>
        <dbReference type="EC" id="3.4.11.10"/>
    </reaction>
</comment>
<comment type="cofactor">
    <cofactor evidence="1">
        <name>Mn(2+)</name>
        <dbReference type="ChEBI" id="CHEBI:29035"/>
    </cofactor>
    <text evidence="1">Binds 2 manganese ions per subunit.</text>
</comment>
<comment type="subcellular location">
    <subcellularLocation>
        <location evidence="1">Cytoplasm</location>
    </subcellularLocation>
</comment>
<comment type="similarity">
    <text evidence="2">Belongs to the peptidase M17 family.</text>
</comment>
<comment type="sequence caution" evidence="2">
    <conflict type="erroneous initiation">
        <sequence resource="EMBL-CDS" id="AAM82713"/>
    </conflict>
</comment>
<keyword id="KW-0031">Aminopeptidase</keyword>
<keyword id="KW-0963">Cytoplasm</keyword>
<keyword id="KW-0378">Hydrolase</keyword>
<keyword id="KW-0464">Manganese</keyword>
<keyword id="KW-0645">Protease</keyword>
<keyword id="KW-1185">Reference proteome</keyword>
<evidence type="ECO:0000250" key="1"/>
<evidence type="ECO:0000305" key="2"/>
<feature type="chain" id="PRO_0000165803" description="Probable cytosol aminopeptidase">
    <location>
        <begin position="1"/>
        <end position="486"/>
    </location>
</feature>
<feature type="sequence conflict" description="In Ref. 3; CAA73771." evidence="2" ref="3">
    <original>L</original>
    <variation>R</variation>
    <location>
        <position position="364"/>
    </location>
</feature>